<accession>Q5R9K0</accession>
<keyword id="KW-0007">Acetylation</keyword>
<keyword id="KW-0143">Chaperone</keyword>
<keyword id="KW-0963">Cytoplasm</keyword>
<keyword id="KW-0273">Eye lens protein</keyword>
<keyword id="KW-0325">Glycoprotein</keyword>
<keyword id="KW-0458">Lysosome</keyword>
<keyword id="KW-0479">Metal-binding</keyword>
<keyword id="KW-0488">Methylation</keyword>
<keyword id="KW-0539">Nucleus</keyword>
<keyword id="KW-0597">Phosphoprotein</keyword>
<keyword id="KW-1185">Reference proteome</keyword>
<keyword id="KW-0964">Secreted</keyword>
<keyword id="KW-0862">Zinc</keyword>
<dbReference type="EMBL" id="CR859387">
    <property type="protein sequence ID" value="CAH91560.1"/>
    <property type="molecule type" value="mRNA"/>
</dbReference>
<dbReference type="RefSeq" id="NP_001125917.1">
    <property type="nucleotide sequence ID" value="NM_001132445.2"/>
</dbReference>
<dbReference type="RefSeq" id="XP_009245315.1">
    <property type="nucleotide sequence ID" value="XM_009247040.4"/>
</dbReference>
<dbReference type="RefSeq" id="XP_009245316.1">
    <property type="nucleotide sequence ID" value="XM_009247041.3"/>
</dbReference>
<dbReference type="RefSeq" id="XP_009245317.1">
    <property type="nucleotide sequence ID" value="XM_009247042.4"/>
</dbReference>
<dbReference type="RefSeq" id="XP_009245318.1">
    <property type="nucleotide sequence ID" value="XM_009247043.4"/>
</dbReference>
<dbReference type="RefSeq" id="XP_009245319.1">
    <property type="nucleotide sequence ID" value="XM_009247044.4"/>
</dbReference>
<dbReference type="RefSeq" id="XP_009245320.1">
    <property type="nucleotide sequence ID" value="XM_009247045.4"/>
</dbReference>
<dbReference type="RefSeq" id="XP_054379729.1">
    <property type="nucleotide sequence ID" value="XM_054523754.1"/>
</dbReference>
<dbReference type="RefSeq" id="XP_063583981.1">
    <property type="nucleotide sequence ID" value="XM_063727911.1"/>
</dbReference>
<dbReference type="BMRB" id="Q5R9K0"/>
<dbReference type="SMR" id="Q5R9K0"/>
<dbReference type="FunCoup" id="Q5R9K0">
    <property type="interactions" value="644"/>
</dbReference>
<dbReference type="STRING" id="9601.ENSPPYP00000004431"/>
<dbReference type="GlyCosmos" id="Q5R9K0">
    <property type="glycosylation" value="1 site, No reported glycans"/>
</dbReference>
<dbReference type="Ensembl" id="ENSPPYT00000004606.3">
    <property type="protein sequence ID" value="ENSPPYP00000004431.2"/>
    <property type="gene ID" value="ENSPPYG00000003868.3"/>
</dbReference>
<dbReference type="GeneID" id="100172850"/>
<dbReference type="KEGG" id="pon:100172850"/>
<dbReference type="CTD" id="1410"/>
<dbReference type="eggNOG" id="KOG3591">
    <property type="taxonomic scope" value="Eukaryota"/>
</dbReference>
<dbReference type="GeneTree" id="ENSGT00940000157434"/>
<dbReference type="HOGENOM" id="CLU_095001_2_0_1"/>
<dbReference type="InParanoid" id="Q5R9K0"/>
<dbReference type="OMA" id="FRDWWED"/>
<dbReference type="OrthoDB" id="1431247at2759"/>
<dbReference type="TreeFam" id="TF105049"/>
<dbReference type="Proteomes" id="UP000001595">
    <property type="component" value="Chromosome 11"/>
</dbReference>
<dbReference type="GO" id="GO:0005737">
    <property type="term" value="C:cytoplasm"/>
    <property type="evidence" value="ECO:0000250"/>
    <property type="project" value="UniProtKB"/>
</dbReference>
<dbReference type="GO" id="GO:0005829">
    <property type="term" value="C:cytosol"/>
    <property type="evidence" value="ECO:0007669"/>
    <property type="project" value="Ensembl"/>
</dbReference>
<dbReference type="GO" id="GO:0005576">
    <property type="term" value="C:extracellular region"/>
    <property type="evidence" value="ECO:0007669"/>
    <property type="project" value="UniProtKB-SubCell"/>
</dbReference>
<dbReference type="GO" id="GO:0005764">
    <property type="term" value="C:lysosome"/>
    <property type="evidence" value="ECO:0007669"/>
    <property type="project" value="UniProtKB-SubCell"/>
</dbReference>
<dbReference type="GO" id="GO:0005739">
    <property type="term" value="C:mitochondrion"/>
    <property type="evidence" value="ECO:0007669"/>
    <property type="project" value="Ensembl"/>
</dbReference>
<dbReference type="GO" id="GO:0005634">
    <property type="term" value="C:nucleus"/>
    <property type="evidence" value="ECO:0000250"/>
    <property type="project" value="UniProtKB"/>
</dbReference>
<dbReference type="GO" id="GO:0005886">
    <property type="term" value="C:plasma membrane"/>
    <property type="evidence" value="ECO:0007669"/>
    <property type="project" value="Ensembl"/>
</dbReference>
<dbReference type="GO" id="GO:0032991">
    <property type="term" value="C:protein-containing complex"/>
    <property type="evidence" value="ECO:0000250"/>
    <property type="project" value="UniProtKB"/>
</dbReference>
<dbReference type="GO" id="GO:0030018">
    <property type="term" value="C:Z disc"/>
    <property type="evidence" value="ECO:0007669"/>
    <property type="project" value="Ensembl"/>
</dbReference>
<dbReference type="GO" id="GO:0001540">
    <property type="term" value="F:amyloid-beta binding"/>
    <property type="evidence" value="ECO:0007669"/>
    <property type="project" value="Ensembl"/>
</dbReference>
<dbReference type="GO" id="GO:0046872">
    <property type="term" value="F:metal ion binding"/>
    <property type="evidence" value="ECO:0007669"/>
    <property type="project" value="UniProtKB-KW"/>
</dbReference>
<dbReference type="GO" id="GO:0042803">
    <property type="term" value="F:protein homodimerization activity"/>
    <property type="evidence" value="ECO:0000250"/>
    <property type="project" value="UniProtKB"/>
</dbReference>
<dbReference type="GO" id="GO:0044877">
    <property type="term" value="F:protein-containing complex binding"/>
    <property type="evidence" value="ECO:0007669"/>
    <property type="project" value="Ensembl"/>
</dbReference>
<dbReference type="GO" id="GO:0005212">
    <property type="term" value="F:structural constituent of eye lens"/>
    <property type="evidence" value="ECO:0007669"/>
    <property type="project" value="UniProtKB-KW"/>
</dbReference>
<dbReference type="GO" id="GO:0051082">
    <property type="term" value="F:unfolded protein binding"/>
    <property type="evidence" value="ECO:0007669"/>
    <property type="project" value="Ensembl"/>
</dbReference>
<dbReference type="GO" id="GO:0060561">
    <property type="term" value="P:apoptotic process involved in morphogenesis"/>
    <property type="evidence" value="ECO:0007669"/>
    <property type="project" value="Ensembl"/>
</dbReference>
<dbReference type="GO" id="GO:0071480">
    <property type="term" value="P:cellular response to gamma radiation"/>
    <property type="evidence" value="ECO:0007669"/>
    <property type="project" value="Ensembl"/>
</dbReference>
<dbReference type="GO" id="GO:0002088">
    <property type="term" value="P:lens development in camera-type eye"/>
    <property type="evidence" value="ECO:0007669"/>
    <property type="project" value="Ensembl"/>
</dbReference>
<dbReference type="GO" id="GO:0007517">
    <property type="term" value="P:muscle organ development"/>
    <property type="evidence" value="ECO:0007669"/>
    <property type="project" value="Ensembl"/>
</dbReference>
<dbReference type="GO" id="GO:1905907">
    <property type="term" value="P:negative regulation of amyloid fibril formation"/>
    <property type="evidence" value="ECO:0007669"/>
    <property type="project" value="Ensembl"/>
</dbReference>
<dbReference type="GO" id="GO:0043066">
    <property type="term" value="P:negative regulation of apoptotic process"/>
    <property type="evidence" value="ECO:0007669"/>
    <property type="project" value="Ensembl"/>
</dbReference>
<dbReference type="GO" id="GO:0045892">
    <property type="term" value="P:negative regulation of DNA-templated transcription"/>
    <property type="evidence" value="ECO:0000250"/>
    <property type="project" value="UniProtKB"/>
</dbReference>
<dbReference type="GO" id="GO:0010629">
    <property type="term" value="P:negative regulation of gene expression"/>
    <property type="evidence" value="ECO:0007669"/>
    <property type="project" value="Ensembl"/>
</dbReference>
<dbReference type="GO" id="GO:0032387">
    <property type="term" value="P:negative regulation of intracellular transport"/>
    <property type="evidence" value="ECO:0007669"/>
    <property type="project" value="Ensembl"/>
</dbReference>
<dbReference type="GO" id="GO:0031333">
    <property type="term" value="P:negative regulation of protein-containing complex assembly"/>
    <property type="evidence" value="ECO:0007669"/>
    <property type="project" value="Ensembl"/>
</dbReference>
<dbReference type="GO" id="GO:0042026">
    <property type="term" value="P:protein refolding"/>
    <property type="evidence" value="ECO:0007669"/>
    <property type="project" value="TreeGrafter"/>
</dbReference>
<dbReference type="GO" id="GO:0050821">
    <property type="term" value="P:protein stabilization"/>
    <property type="evidence" value="ECO:0007669"/>
    <property type="project" value="Ensembl"/>
</dbReference>
<dbReference type="GO" id="GO:0009408">
    <property type="term" value="P:response to heat"/>
    <property type="evidence" value="ECO:0007669"/>
    <property type="project" value="TreeGrafter"/>
</dbReference>
<dbReference type="GO" id="GO:0042542">
    <property type="term" value="P:response to hydrogen peroxide"/>
    <property type="evidence" value="ECO:0007669"/>
    <property type="project" value="Ensembl"/>
</dbReference>
<dbReference type="GO" id="GO:0001666">
    <property type="term" value="P:response to hypoxia"/>
    <property type="evidence" value="ECO:0007669"/>
    <property type="project" value="Ensembl"/>
</dbReference>
<dbReference type="GO" id="GO:0007021">
    <property type="term" value="P:tubulin complex assembly"/>
    <property type="evidence" value="ECO:0007669"/>
    <property type="project" value="Ensembl"/>
</dbReference>
<dbReference type="CDD" id="cd06498">
    <property type="entry name" value="ACD_alphaB-crystallin_HspB5"/>
    <property type="match status" value="1"/>
</dbReference>
<dbReference type="FunFam" id="2.60.40.790:FF:000011">
    <property type="entry name" value="Alpha-crystallin B chain"/>
    <property type="match status" value="1"/>
</dbReference>
<dbReference type="Gene3D" id="2.60.40.790">
    <property type="match status" value="1"/>
</dbReference>
<dbReference type="InterPro" id="IPR002068">
    <property type="entry name" value="A-crystallin/Hsp20_dom"/>
</dbReference>
<dbReference type="InterPro" id="IPR037882">
    <property type="entry name" value="ACD_alphaB-crystallin"/>
</dbReference>
<dbReference type="InterPro" id="IPR055269">
    <property type="entry name" value="Alpha-crystallin/HSP_16"/>
</dbReference>
<dbReference type="InterPro" id="IPR001436">
    <property type="entry name" value="Alpha-crystallin/sHSP_animal"/>
</dbReference>
<dbReference type="InterPro" id="IPR003090">
    <property type="entry name" value="Alpha-crystallin_N"/>
</dbReference>
<dbReference type="InterPro" id="IPR008978">
    <property type="entry name" value="HSP20-like_chaperone"/>
</dbReference>
<dbReference type="PANTHER" id="PTHR45640:SF5">
    <property type="entry name" value="ALPHA-CRYSTALLIN B CHAIN"/>
    <property type="match status" value="1"/>
</dbReference>
<dbReference type="PANTHER" id="PTHR45640">
    <property type="entry name" value="HEAT SHOCK PROTEIN HSP-12.2-RELATED"/>
    <property type="match status" value="1"/>
</dbReference>
<dbReference type="Pfam" id="PF00525">
    <property type="entry name" value="Crystallin"/>
    <property type="match status" value="1"/>
</dbReference>
<dbReference type="Pfam" id="PF00011">
    <property type="entry name" value="HSP20"/>
    <property type="match status" value="1"/>
</dbReference>
<dbReference type="PIRSF" id="PIRSF036514">
    <property type="entry name" value="Sm_HSP_B1"/>
    <property type="match status" value="1"/>
</dbReference>
<dbReference type="PRINTS" id="PR00299">
    <property type="entry name" value="ACRYSTALLIN"/>
</dbReference>
<dbReference type="SUPFAM" id="SSF49764">
    <property type="entry name" value="HSP20-like chaperones"/>
    <property type="match status" value="1"/>
</dbReference>
<dbReference type="PROSITE" id="PS01031">
    <property type="entry name" value="SHSP"/>
    <property type="match status" value="1"/>
</dbReference>
<evidence type="ECO:0000250" key="1"/>
<evidence type="ECO:0000250" key="2">
    <source>
        <dbReference type="UniProtKB" id="P02510"/>
    </source>
</evidence>
<evidence type="ECO:0000250" key="3">
    <source>
        <dbReference type="UniProtKB" id="P02511"/>
    </source>
</evidence>
<evidence type="ECO:0000250" key="4">
    <source>
        <dbReference type="UniProtKB" id="P23927"/>
    </source>
</evidence>
<evidence type="ECO:0000250" key="5">
    <source>
        <dbReference type="UniProtKB" id="P23928"/>
    </source>
</evidence>
<evidence type="ECO:0000255" key="6">
    <source>
        <dbReference type="PROSITE-ProRule" id="PRU00285"/>
    </source>
</evidence>
<evidence type="ECO:0000256" key="7">
    <source>
        <dbReference type="SAM" id="MobiDB-lite"/>
    </source>
</evidence>
<sequence>MDIAIHHPWIRRPFFPFHSPSRLFDQFFGEHLLESDLFPTSTSLSPFYLRPPSFLRAPSWFDTGLSEMRLEKDRFSVNLDVKHFSPEELKVKVLGDVIEVHGKHEERQDEHGFISREFHRKYRIPADVDPLTITSSLSSDGVLTVNGPRKQVSGPERTIPITREEKPAVTAAPKK</sequence>
<comment type="function">
    <text evidence="4">May contribute to the transparency and refractive index of the lens. Has chaperone-like activity, preventing aggregation of various proteins under a wide range of stress conditions. In lens epithelial cells, stabilizes the ATP6V1A protein, preventing its degradation by the proteasome (By similarity).</text>
</comment>
<comment type="subunit">
    <text evidence="3 4">Heteromer composed of three CRYAA and one CRYAB subunits. Aggregates with homologous proteins, including the small heat shock protein HSPB1, to form large heteromeric complexes. Inter-subunit bridging via zinc ions enhances stability, which is crucial as there is no protein turn over in the lens. Interacts with HSPBAP1 and TTN/titin. Interacts with TMEM109; in the cellular response to DNA damage. Interacts with DES; binds rapidly during early stages of DES filament assembly and a reduced binding seen in the later stages. Interacts with TMED10; the interaction mediates the translocation from the cytoplasm into the ERGIC (endoplasmic reticulum-Golgi intermediate compartment) and thereby secretion. Interacts with ATP6V1A and with MTOR, forming a ternary complex (By similarity).</text>
</comment>
<comment type="subcellular location">
    <subcellularLocation>
        <location evidence="3">Cytoplasm</location>
    </subcellularLocation>
    <subcellularLocation>
        <location evidence="3">Nucleus</location>
    </subcellularLocation>
    <subcellularLocation>
        <location evidence="3">Secreted</location>
    </subcellularLocation>
    <subcellularLocation>
        <location evidence="4">Lysosome</location>
    </subcellularLocation>
    <text evidence="3">Translocates to the nucleus during heat shock and resides in sub-nuclear structures known as SC35 speckles or nuclear splicing speckles. Localizes at the Z-bands and the intercalated disk in cardiomyocytes. Can be secreted; the secretion is dependent on protein unfolding and facilitated by the cargo receptor TMED10; it results in protein translocation from the cytoplasm into the ERGIC (endoplasmic reticulum-Golgi intermediate compartment) followed by vesicle entry and secretion.</text>
</comment>
<comment type="similarity">
    <text evidence="6">Belongs to the small heat shock protein (HSP20) family.</text>
</comment>
<proteinExistence type="evidence at transcript level"/>
<organism>
    <name type="scientific">Pongo abelii</name>
    <name type="common">Sumatran orangutan</name>
    <name type="synonym">Pongo pygmaeus abelii</name>
    <dbReference type="NCBI Taxonomy" id="9601"/>
    <lineage>
        <taxon>Eukaryota</taxon>
        <taxon>Metazoa</taxon>
        <taxon>Chordata</taxon>
        <taxon>Craniata</taxon>
        <taxon>Vertebrata</taxon>
        <taxon>Euteleostomi</taxon>
        <taxon>Mammalia</taxon>
        <taxon>Eutheria</taxon>
        <taxon>Euarchontoglires</taxon>
        <taxon>Primates</taxon>
        <taxon>Haplorrhini</taxon>
        <taxon>Catarrhini</taxon>
        <taxon>Hominidae</taxon>
        <taxon>Pongo</taxon>
    </lineage>
</organism>
<reference key="1">
    <citation type="submission" date="2004-11" db="EMBL/GenBank/DDBJ databases">
        <authorList>
            <consortium name="The German cDNA consortium"/>
        </authorList>
    </citation>
    <scope>NUCLEOTIDE SEQUENCE [LARGE SCALE MRNA]</scope>
    <source>
        <tissue>Heart</tissue>
    </source>
</reference>
<gene>
    <name type="primary">CRYAB</name>
</gene>
<name>CRYAB_PONAB</name>
<protein>
    <recommendedName>
        <fullName>Alpha-crystallin B chain</fullName>
    </recommendedName>
    <alternativeName>
        <fullName>Alpha(B)-crystallin</fullName>
    </alternativeName>
</protein>
<feature type="chain" id="PRO_0000125911" description="Alpha-crystallin B chain">
    <location>
        <begin position="1"/>
        <end position="175"/>
    </location>
</feature>
<feature type="domain" description="sHSP" evidence="6">
    <location>
        <begin position="56"/>
        <end position="164"/>
    </location>
</feature>
<feature type="region of interest" description="Disordered" evidence="7">
    <location>
        <begin position="146"/>
        <end position="175"/>
    </location>
</feature>
<feature type="binding site" evidence="1">
    <location>
        <position position="83"/>
    </location>
    <ligand>
        <name>Zn(2+)</name>
        <dbReference type="ChEBI" id="CHEBI:29105"/>
        <label>1</label>
    </ligand>
</feature>
<feature type="binding site" evidence="1">
    <location>
        <position position="104"/>
    </location>
    <ligand>
        <name>Zn(2+)</name>
        <dbReference type="ChEBI" id="CHEBI:29105"/>
        <label>2</label>
    </ligand>
</feature>
<feature type="binding site" evidence="1">
    <location>
        <position position="106"/>
    </location>
    <ligand>
        <name>Zn(2+)</name>
        <dbReference type="ChEBI" id="CHEBI:29105"/>
        <label>2</label>
    </ligand>
</feature>
<feature type="binding site" evidence="1">
    <location>
        <position position="111"/>
    </location>
    <ligand>
        <name>Zn(2+)</name>
        <dbReference type="ChEBI" id="CHEBI:29105"/>
        <label>1</label>
    </ligand>
</feature>
<feature type="binding site" evidence="1">
    <location>
        <position position="119"/>
    </location>
    <ligand>
        <name>Zn(2+)</name>
        <dbReference type="ChEBI" id="CHEBI:29105"/>
        <label>1</label>
    </ligand>
</feature>
<feature type="modified residue" description="N-acetylmethionine" evidence="2">
    <location>
        <position position="1"/>
    </location>
</feature>
<feature type="modified residue" description="Phosphoserine" evidence="2">
    <location>
        <position position="19"/>
    </location>
</feature>
<feature type="modified residue" description="Phosphoserine" evidence="2">
    <location>
        <position position="45"/>
    </location>
</feature>
<feature type="modified residue" description="Phosphoserine" evidence="2">
    <location>
        <position position="59"/>
    </location>
</feature>
<feature type="modified residue" description="N6-acetyllysine" evidence="3">
    <location>
        <position position="92"/>
    </location>
</feature>
<feature type="modified residue" description="N6-acetyllysine" evidence="3">
    <location>
        <position position="166"/>
    </location>
</feature>
<feature type="glycosylation site" description="O-linked (GlcNAc) serine" evidence="3">
    <location>
        <position position="41"/>
    </location>
</feature>
<feature type="glycosylation site" description="O-linked (GlcNAc) threonine" evidence="5">
    <location>
        <position position="170"/>
    </location>
</feature>